<comment type="function">
    <text evidence="2 12 13 14">E3 ubiquitin-protein ligase which accepts ubiquitin from an E2 ubiquitin-conjugating enzyme in the form of a thioester and then directly transfers the ubiquitin to targeted substrates. Specifically ubiquitinates 'Lys-63' in target proteins (By similarity). Monoubiquitinates IGF1R at multiple sites, thus leading to receptor internalization and degradation in lysosomes (PubMed:18286479). Ubiquitinates FGFR1, leading to receptor internalization and degradation in lysosomes. Involved in ubiquitination of ERBB4 intracellular domain E4ICD1 (PubMed:19193720). Predominantly involved in ubiquitination of membrane bound forms of ERBB4 rather than processed precursors and intermediate membrane-anchored 80 kDa fragments (m80HER4), with a lesser role in ubiquitination of ERBB4 intracellular domain E4ICD1 (PubMed:19047365). Promotes ubiquitination of RAPGEF2. Involved in the pathway leading to the degradation of VEGFR-2/KDFR, independently of its ubiquitin-ligase activity. Part of a signaling complex composed of NEDD4, RAP2A and TNIK which regulates neuronal dendrite extension and arborization during development (PubMed:20159449). Ubiquitinates TNK2 and regulates EGF-induced degradation of EGFR and TNF2 (By similarity). Ubiquitinates BRAT1 and this ubiquitination is enhanced in the presence of NDFIP1 (By similarity). Ubiquitinates DAZAP2, leading to its proteasomal degradation (By similarity). Ubiquitinates POLR2A (By similarity). Functions as a platform to recruit USP13 to form an NEDD4-USP13 deubiquitination complex that plays a critical role in cleaving the 'Lys-48'-linked ubiquitin chains of VPS34 and then stabilizing VPS34, thus promoting the formation of autophagosomes (By similarity).</text>
</comment>
<comment type="catalytic activity">
    <reaction evidence="2">
        <text>S-ubiquitinyl-[E2 ubiquitin-conjugating enzyme]-L-cysteine + [acceptor protein]-L-lysine = [E2 ubiquitin-conjugating enzyme]-L-cysteine + N(6)-ubiquitinyl-[acceptor protein]-L-lysine.</text>
        <dbReference type="EC" id="2.3.2.26"/>
    </reaction>
</comment>
<comment type="activity regulation">
    <text evidence="1">Activated by NDFIP1- and NDFIP2-binding.</text>
</comment>
<comment type="pathway">
    <text>Protein modification; protein ubiquitination.</text>
</comment>
<comment type="subunit">
    <text evidence="2 8 9 10 11 12 13 14 15 16 17 18 19">Interacts with NDFIP1 and NDFIP2; this interaction activates the E3 ubiquitin-protein ligase and may induce its recruitment to exosomes. Interacts with UBE2D2 (PubMed:9182527). Binds, in vitro, through the WW2 and WW3 domains, to neural isoforms of ENAH that contain the PPSY motif (PubMed:9407065). Interacts with BEAN1, LITAF, RNF11, WBP1, WBP2, PMEPAI and PRRG2 (PubMed:11042109). Interacts with murine leukemia virus Gag polyprotein (via PPXY motif) (PubMed:15908698). Interacts (via C2 domain) with GRB10 (via SH2 domain) (PubMed:12697834, PubMed:15060076, PubMed:18286479, PubMed:20980250). Interacts with ERBB4 (PubMed:19047365, PubMed:19193720). Interacts with TNIK; the interaction is direct, allows the TNIK-dependent recruitment of RAP2A and its ubiquitination by NEDD4 (PubMed:20159449). Interacts (via WW3 domain) with TNK2; EGF promotes this interaction. Interacts (via WW3 domain) with FGFR1 (via C-terminus). Interacts with OTUD7B (By similarity). Interacts with ISG15 (By similarity). Interacts (via WW domain) with RAPGEF2; this interaction leads to ubiquitination and degradation via the proteasome pathway. Interacts (via WW domains) with ARRDC3 (via PPXY motifs) (By similarity). Interacts with LAPTM4B; may play a role in the lysosomal sorting of LAPTM4B (By similarity). Interacts with ZBTB7B (PubMed:28784777). Interacts with PRRG4 (via cytoplasmic domain) (By similarity). Interacts directly with LDLRAD3; this interaction promotes NEDD4 auto-ubiquitination (By similarity). Interacts with ADRB2 (By similarity). Interacts (via WW domains) with DAZAP2 (via PPAY motif) (By similarity).</text>
</comment>
<comment type="interaction">
    <interactant intactId="EBI-773516">
        <id>P46935</id>
    </interactant>
    <interactant intactId="EBI-6304006">
        <id>Q9EQG5</id>
        <label>Bean1</label>
    </interactant>
    <organismsDiffer>false</organismsDiffer>
    <experiments>3</experiments>
</comment>
<comment type="interaction">
    <interactant intactId="EBI-773516">
        <id>P46935</id>
    </interactant>
    <interactant intactId="EBI-861810">
        <id>Q60760</id>
        <label>Grb10</label>
    </interactant>
    <organismsDiffer>false</organismsDiffer>
    <experiments>7</experiments>
</comment>
<comment type="interaction">
    <interactant intactId="EBI-773516">
        <id>P46935</id>
    </interactant>
    <interactant intactId="EBI-643664">
        <id>Q9JLJ0</id>
        <label>Litaf</label>
    </interactant>
    <organismsDiffer>false</organismsDiffer>
    <experiments>5</experiments>
</comment>
<comment type="interaction">
    <interactant intactId="EBI-773516">
        <id>P46935</id>
    </interactant>
    <interactant intactId="EBI-6304119">
        <id>Q8R0W6</id>
        <label>Ndfip1</label>
    </interactant>
    <organismsDiffer>false</organismsDiffer>
    <experiments>5</experiments>
</comment>
<comment type="interaction">
    <interactant intactId="EBI-773516">
        <id>P46935</id>
    </interactant>
    <interactant intactId="EBI-6304097">
        <id>Q9D7R2</id>
        <label>Pmepa1</label>
    </interactant>
    <organismsDiffer>false</organismsDiffer>
    <experiments>5</experiments>
</comment>
<comment type="interaction">
    <interactant intactId="EBI-773516">
        <id>P46935</id>
    </interactant>
    <interactant intactId="EBI-6304055">
        <id>Q8R182</id>
        <label>Prrg2</label>
    </interactant>
    <organismsDiffer>false</organismsDiffer>
    <experiments>5</experiments>
</comment>
<comment type="interaction">
    <interactant intactId="EBI-773516">
        <id>P46935</id>
    </interactant>
    <interactant intactId="EBI-4405826">
        <id>Q9QYK7</id>
        <label>Rnf11</label>
    </interactant>
    <organismsDiffer>false</organismsDiffer>
    <experiments>4</experiments>
</comment>
<comment type="interaction">
    <interactant intactId="EBI-773516">
        <id>P46935</id>
    </interactant>
    <interactant intactId="EBI-6304160">
        <id>P97764</id>
        <label>Wbp1</label>
    </interactant>
    <organismsDiffer>false</organismsDiffer>
    <experiments>3</experiments>
</comment>
<comment type="interaction">
    <interactant intactId="EBI-773516">
        <id>P46935</id>
    </interactant>
    <interactant intactId="EBI-6304181">
        <id>P97765</id>
        <label>Wbp2</label>
    </interactant>
    <organismsDiffer>false</organismsDiffer>
    <experiments>5</experiments>
</comment>
<comment type="subcellular location">
    <subcellularLocation>
        <location evidence="18">Cytoplasm</location>
    </subcellularLocation>
    <subcellularLocation>
        <location evidence="2">Nucleus</location>
    </subcellularLocation>
    <subcellularLocation>
        <location evidence="12">Cell membrane</location>
        <topology evidence="12">Peripheral membrane protein</topology>
    </subcellularLocation>
    <text evidence="2 12">Predominantly cytoplasmic but also located in the nucleus (By similarity). Recruited to the plasma membrane by GRB10. Once complexed with GRB10 and IGF1R, follows IGF1R internalization, remaining associated with early endosomes. Uncouples from IGF1R-containing endosomes before the sorting of the receptor to the lysosomal compartment (PubMed:18286479). May be recruited to exosomes by NDFIP1 (By similarity).</text>
</comment>
<comment type="tissue specificity">
    <text>Brain.</text>
</comment>
<comment type="domain">
    <text evidence="2 8">WW domains are involved in recognizing PPxY motifs in substrate proteins (By similarity). The WW domains mediate interaction with LITAF, RNF11, WBP1, WBP2, PMEPAI, NDFIP1 and PRRG2 (PubMed:11042109).</text>
</comment>
<comment type="PTM">
    <text evidence="2">Undergoes 'Lys-29'-linked auto-ubiquitination at Lys-847 and serves as a scaffold for recruiting USP13 to form an NEDD4-USP13 deubiquitination complex.</text>
</comment>
<comment type="disruption phenotype">
    <text evidence="15">Lethal during late gestation. Embryos show a retarded development and defects in vasculogenesis and angiogenesis.</text>
</comment>
<comment type="miscellaneous">
    <text>A cysteine residue is required for ubiquitin-thioester formation.</text>
</comment>
<comment type="sequence caution" evidence="20">
    <conflict type="frameshift">
        <sequence resource="EMBL-CDS" id="AAB63360"/>
    </conflict>
</comment>
<keyword id="KW-0002">3D-structure</keyword>
<keyword id="KW-1003">Cell membrane</keyword>
<keyword id="KW-0963">Cytoplasm</keyword>
<keyword id="KW-1017">Isopeptide bond</keyword>
<keyword id="KW-0472">Membrane</keyword>
<keyword id="KW-0524">Neurogenesis</keyword>
<keyword id="KW-0539">Nucleus</keyword>
<keyword id="KW-0597">Phosphoprotein</keyword>
<keyword id="KW-1185">Reference proteome</keyword>
<keyword id="KW-0677">Repeat</keyword>
<keyword id="KW-0808">Transferase</keyword>
<keyword id="KW-0832">Ubl conjugation</keyword>
<keyword id="KW-0833">Ubl conjugation pathway</keyword>
<organism>
    <name type="scientific">Mus musculus</name>
    <name type="common">Mouse</name>
    <dbReference type="NCBI Taxonomy" id="10090"/>
    <lineage>
        <taxon>Eukaryota</taxon>
        <taxon>Metazoa</taxon>
        <taxon>Chordata</taxon>
        <taxon>Craniata</taxon>
        <taxon>Vertebrata</taxon>
        <taxon>Euteleostomi</taxon>
        <taxon>Mammalia</taxon>
        <taxon>Eutheria</taxon>
        <taxon>Euarchontoglires</taxon>
        <taxon>Glires</taxon>
        <taxon>Rodentia</taxon>
        <taxon>Myomorpha</taxon>
        <taxon>Muroidea</taxon>
        <taxon>Muridae</taxon>
        <taxon>Murinae</taxon>
        <taxon>Mus</taxon>
        <taxon>Mus</taxon>
    </lineage>
</organism>
<gene>
    <name type="primary">Nedd4</name>
    <name type="synonym">Kiaa0093</name>
    <name type="synonym">Nedd-4</name>
    <name type="synonym">Nedd4-1</name>
    <name type="synonym">Nedd4a</name>
    <name evidence="2" type="synonym">Rpf1</name>
</gene>
<reference key="1">
    <citation type="journal article" date="1992" name="Biochem. Biophys. Res. Commun.">
        <title>Identification of a set of genes with developmentally down-regulated expression in the mouse brain.</title>
        <authorList>
            <person name="Kumar S."/>
            <person name="Tomooka Y."/>
            <person name="Noda M."/>
        </authorList>
    </citation>
    <scope>NUCLEOTIDE SEQUENCE [MRNA]</scope>
    <source>
        <tissue>Embryo</tissue>
    </source>
</reference>
<reference key="2">
    <citation type="submission" date="1996-05" db="EMBL/GenBank/DDBJ databases">
        <authorList>
            <person name="Kumar S."/>
        </authorList>
    </citation>
    <scope>SEQUENCE REVISION</scope>
</reference>
<reference key="3">
    <citation type="journal article" date="1997" name="J. Biol. Chem.">
        <title>Subcellular localization and ubiquitin-conjugating enzyme (E2) interactions of mammalian HECT family ubiquitin protein ligases.</title>
        <authorList>
            <person name="Hatakeyama S."/>
            <person name="Jensen J.P."/>
            <person name="Weissman A.M."/>
        </authorList>
    </citation>
    <scope>NUCLEOTIDE SEQUENCE [MRNA]</scope>
    <scope>SUBCELLULAR LOCATION</scope>
    <scope>INTERACTION WITH UBE2D2</scope>
    <source>
        <strain>C57BL/6 X CBA</strain>
    </source>
</reference>
<reference key="4">
    <citation type="journal article" date="2005" name="Science">
        <title>The transcriptional landscape of the mammalian genome.</title>
        <authorList>
            <person name="Carninci P."/>
            <person name="Kasukawa T."/>
            <person name="Katayama S."/>
            <person name="Gough J."/>
            <person name="Frith M.C."/>
            <person name="Maeda N."/>
            <person name="Oyama R."/>
            <person name="Ravasi T."/>
            <person name="Lenhard B."/>
            <person name="Wells C."/>
            <person name="Kodzius R."/>
            <person name="Shimokawa K."/>
            <person name="Bajic V.B."/>
            <person name="Brenner S.E."/>
            <person name="Batalov S."/>
            <person name="Forrest A.R."/>
            <person name="Zavolan M."/>
            <person name="Davis M.J."/>
            <person name="Wilming L.G."/>
            <person name="Aidinis V."/>
            <person name="Allen J.E."/>
            <person name="Ambesi-Impiombato A."/>
            <person name="Apweiler R."/>
            <person name="Aturaliya R.N."/>
            <person name="Bailey T.L."/>
            <person name="Bansal M."/>
            <person name="Baxter L."/>
            <person name="Beisel K.W."/>
            <person name="Bersano T."/>
            <person name="Bono H."/>
            <person name="Chalk A.M."/>
            <person name="Chiu K.P."/>
            <person name="Choudhary V."/>
            <person name="Christoffels A."/>
            <person name="Clutterbuck D.R."/>
            <person name="Crowe M.L."/>
            <person name="Dalla E."/>
            <person name="Dalrymple B.P."/>
            <person name="de Bono B."/>
            <person name="Della Gatta G."/>
            <person name="di Bernardo D."/>
            <person name="Down T."/>
            <person name="Engstrom P."/>
            <person name="Fagiolini M."/>
            <person name="Faulkner G."/>
            <person name="Fletcher C.F."/>
            <person name="Fukushima T."/>
            <person name="Furuno M."/>
            <person name="Futaki S."/>
            <person name="Gariboldi M."/>
            <person name="Georgii-Hemming P."/>
            <person name="Gingeras T.R."/>
            <person name="Gojobori T."/>
            <person name="Green R.E."/>
            <person name="Gustincich S."/>
            <person name="Harbers M."/>
            <person name="Hayashi Y."/>
            <person name="Hensch T.K."/>
            <person name="Hirokawa N."/>
            <person name="Hill D."/>
            <person name="Huminiecki L."/>
            <person name="Iacono M."/>
            <person name="Ikeo K."/>
            <person name="Iwama A."/>
            <person name="Ishikawa T."/>
            <person name="Jakt M."/>
            <person name="Kanapin A."/>
            <person name="Katoh M."/>
            <person name="Kawasawa Y."/>
            <person name="Kelso J."/>
            <person name="Kitamura H."/>
            <person name="Kitano H."/>
            <person name="Kollias G."/>
            <person name="Krishnan S.P."/>
            <person name="Kruger A."/>
            <person name="Kummerfeld S.K."/>
            <person name="Kurochkin I.V."/>
            <person name="Lareau L.F."/>
            <person name="Lazarevic D."/>
            <person name="Lipovich L."/>
            <person name="Liu J."/>
            <person name="Liuni S."/>
            <person name="McWilliam S."/>
            <person name="Madan Babu M."/>
            <person name="Madera M."/>
            <person name="Marchionni L."/>
            <person name="Matsuda H."/>
            <person name="Matsuzawa S."/>
            <person name="Miki H."/>
            <person name="Mignone F."/>
            <person name="Miyake S."/>
            <person name="Morris K."/>
            <person name="Mottagui-Tabar S."/>
            <person name="Mulder N."/>
            <person name="Nakano N."/>
            <person name="Nakauchi H."/>
            <person name="Ng P."/>
            <person name="Nilsson R."/>
            <person name="Nishiguchi S."/>
            <person name="Nishikawa S."/>
            <person name="Nori F."/>
            <person name="Ohara O."/>
            <person name="Okazaki Y."/>
            <person name="Orlando V."/>
            <person name="Pang K.C."/>
            <person name="Pavan W.J."/>
            <person name="Pavesi G."/>
            <person name="Pesole G."/>
            <person name="Petrovsky N."/>
            <person name="Piazza S."/>
            <person name="Reed J."/>
            <person name="Reid J.F."/>
            <person name="Ring B.Z."/>
            <person name="Ringwald M."/>
            <person name="Rost B."/>
            <person name="Ruan Y."/>
            <person name="Salzberg S.L."/>
            <person name="Sandelin A."/>
            <person name="Schneider C."/>
            <person name="Schoenbach C."/>
            <person name="Sekiguchi K."/>
            <person name="Semple C.A."/>
            <person name="Seno S."/>
            <person name="Sessa L."/>
            <person name="Sheng Y."/>
            <person name="Shibata Y."/>
            <person name="Shimada H."/>
            <person name="Shimada K."/>
            <person name="Silva D."/>
            <person name="Sinclair B."/>
            <person name="Sperling S."/>
            <person name="Stupka E."/>
            <person name="Sugiura K."/>
            <person name="Sultana R."/>
            <person name="Takenaka Y."/>
            <person name="Taki K."/>
            <person name="Tammoja K."/>
            <person name="Tan S.L."/>
            <person name="Tang S."/>
            <person name="Taylor M.S."/>
            <person name="Tegner J."/>
            <person name="Teichmann S.A."/>
            <person name="Ueda H.R."/>
            <person name="van Nimwegen E."/>
            <person name="Verardo R."/>
            <person name="Wei C.L."/>
            <person name="Yagi K."/>
            <person name="Yamanishi H."/>
            <person name="Zabarovsky E."/>
            <person name="Zhu S."/>
            <person name="Zimmer A."/>
            <person name="Hide W."/>
            <person name="Bult C."/>
            <person name="Grimmond S.M."/>
            <person name="Teasdale R.D."/>
            <person name="Liu E.T."/>
            <person name="Brusic V."/>
            <person name="Quackenbush J."/>
            <person name="Wahlestedt C."/>
            <person name="Mattick J.S."/>
            <person name="Hume D.A."/>
            <person name="Kai C."/>
            <person name="Sasaki D."/>
            <person name="Tomaru Y."/>
            <person name="Fukuda S."/>
            <person name="Kanamori-Katayama M."/>
            <person name="Suzuki M."/>
            <person name="Aoki J."/>
            <person name="Arakawa T."/>
            <person name="Iida J."/>
            <person name="Imamura K."/>
            <person name="Itoh M."/>
            <person name="Kato T."/>
            <person name="Kawaji H."/>
            <person name="Kawagashira N."/>
            <person name="Kawashima T."/>
            <person name="Kojima M."/>
            <person name="Kondo S."/>
            <person name="Konno H."/>
            <person name="Nakano K."/>
            <person name="Ninomiya N."/>
            <person name="Nishio T."/>
            <person name="Okada M."/>
            <person name="Plessy C."/>
            <person name="Shibata K."/>
            <person name="Shiraki T."/>
            <person name="Suzuki S."/>
            <person name="Tagami M."/>
            <person name="Waki K."/>
            <person name="Watahiki A."/>
            <person name="Okamura-Oho Y."/>
            <person name="Suzuki H."/>
            <person name="Kawai J."/>
            <person name="Hayashizaki Y."/>
        </authorList>
    </citation>
    <scope>NUCLEOTIDE SEQUENCE [LARGE SCALE MRNA]</scope>
    <source>
        <strain>C57BL/6J</strain>
        <strain>NOD</strain>
        <tissue>Thymus</tissue>
    </source>
</reference>
<reference key="5">
    <citation type="journal article" date="2003" name="DNA Res.">
        <title>Prediction of the coding sequences of mouse homologues of KIAA gene: II. The complete nucleotide sequences of 400 mouse KIAA-homologous cDNAs identified by screening of terminal sequences of cDNA clones randomly sampled from size-fractionated libraries.</title>
        <authorList>
            <person name="Okazaki N."/>
            <person name="Kikuno R."/>
            <person name="Ohara R."/>
            <person name="Inamoto S."/>
            <person name="Aizawa H."/>
            <person name="Yuasa S."/>
            <person name="Nakajima D."/>
            <person name="Nagase T."/>
            <person name="Ohara O."/>
            <person name="Koga H."/>
        </authorList>
    </citation>
    <scope>NUCLEOTIDE SEQUENCE [LARGE SCALE MRNA]</scope>
    <source>
        <tissue>Brain</tissue>
    </source>
</reference>
<reference key="6">
    <citation type="journal article" date="1997" name="J. Biol. Chem.">
        <title>The WW domain of neural protein FE65 interacts with proline-rich motifs in Mena, the mammalian homolog of Drosophila enabled.</title>
        <authorList>
            <person name="Ermekova K.S."/>
            <person name="Zambrano N."/>
            <person name="Linn H."/>
            <person name="Minopoli G."/>
            <person name="Gertler F."/>
            <person name="Russo T."/>
            <person name="Sudol M."/>
        </authorList>
    </citation>
    <scope>INTERACTION WITH ENAH</scope>
</reference>
<reference key="7">
    <citation type="journal article" date="2000" name="Biochem. J.">
        <title>Identification of multiple proteins expressed in murine embryos as binding partners for the WW domains of the ubiquitin-protein ligase Nedd4.</title>
        <authorList>
            <person name="Jolliffe C.N."/>
            <person name="Harvey K.F."/>
            <person name="Haines B.P."/>
            <person name="Parasivam G."/>
            <person name="Kumar S."/>
        </authorList>
    </citation>
    <scope>INTERACTION WITH BEAN1; LITAF; RNF11; WBP1; WBP2; PMEPAI; NDFIP1 AND PRRG2</scope>
    <scope>DOMAINS</scope>
    <source>
        <tissue>Embryo</tissue>
    </source>
</reference>
<reference key="8">
    <citation type="journal article" date="2003" name="Mol. Cell. Biol.">
        <title>The Grb10/Nedd4 complex regulates ligand-induced ubiquitination and stability of the insulin-like growth factor I receptor.</title>
        <authorList>
            <person name="Vecchione A."/>
            <person name="Marchese A."/>
            <person name="Henry P."/>
            <person name="Rotin D."/>
            <person name="Morrione A."/>
        </authorList>
    </citation>
    <scope>INTERACTION WITH GRB10</scope>
</reference>
<reference key="9">
    <citation type="journal article" date="2004" name="J. Biol. Chem.">
        <title>Grb10 prevents Nedd4-mediated vascular endothelial growth factor receptor-2 degradation.</title>
        <authorList>
            <person name="Murdaca J."/>
            <person name="Treins C."/>
            <person name="Monthouel-Kartmann M.N."/>
            <person name="Pontier-Bres R."/>
            <person name="Kumar S."/>
            <person name="Van Obberghen E."/>
            <person name="Giorgetti-Peraldi S."/>
        </authorList>
    </citation>
    <scope>FUNCTION</scope>
    <scope>INTERACTION WITH GRB10</scope>
    <scope>MUTAGENESIS OF CYS-854</scope>
</reference>
<reference key="10">
    <citation type="journal article" date="2005" name="J. Biol. Chem.">
        <title>Tsg101 and Alix interact with murine leukemia virus Gag and cooperate with Nedd4 ubiquitin ligases during budding.</title>
        <authorList>
            <person name="Segura-Morales C."/>
            <person name="Pescia C."/>
            <person name="Chatellard-Causse C."/>
            <person name="Sadoul R."/>
            <person name="Bertrand E."/>
            <person name="Basyuk E."/>
        </authorList>
    </citation>
    <scope>INTERACTION WITH MURINE LEUKEMIA VIRUS GAG POLYPROTEIN</scope>
</reference>
<reference key="11">
    <citation type="journal article" date="2006" name="Mol. Cell. Proteomics">
        <title>Comprehensive identification of phosphorylation sites in postsynaptic density preparations.</title>
        <authorList>
            <person name="Trinidad J.C."/>
            <person name="Specht C.G."/>
            <person name="Thalhammer A."/>
            <person name="Schoepfer R."/>
            <person name="Burlingame A.L."/>
        </authorList>
    </citation>
    <scope>PHOSPHORYLATION [LARGE SCALE ANALYSIS] AT SER-309</scope>
    <scope>IDENTIFICATION BY MASS SPECTROMETRY [LARGE SCALE ANALYSIS]</scope>
    <source>
        <tissue>Brain</tissue>
    </source>
</reference>
<reference key="12">
    <citation type="journal article" date="2007" name="Proc. Natl. Acad. Sci. U.S.A.">
        <title>Large-scale phosphorylation analysis of mouse liver.</title>
        <authorList>
            <person name="Villen J."/>
            <person name="Beausoleil S.A."/>
            <person name="Gerber S.A."/>
            <person name="Gygi S.P."/>
        </authorList>
    </citation>
    <scope>PHOSPHORYLATION [LARGE SCALE ANALYSIS] AT SER-309</scope>
    <scope>IDENTIFICATION BY MASS SPECTROMETRY [LARGE SCALE ANALYSIS]</scope>
    <source>
        <tissue>Liver</tissue>
    </source>
</reference>
<reference key="13">
    <citation type="journal article" date="2008" name="J. Cell. Physiol.">
        <title>Grb10/Nedd4-mediated multiubiquitination of the insulin-like growth factor receptor regulates receptor internalization.</title>
        <authorList>
            <person name="Monami G."/>
            <person name="Emiliozzi V."/>
            <person name="Morrione A."/>
        </authorList>
    </citation>
    <scope>FUNCTION</scope>
    <scope>INTERACTION WITH GRB10</scope>
    <scope>SUBCELLULAR LOCATION</scope>
</reference>
<reference key="14">
    <citation type="journal article" date="2009" name="FASEB J.">
        <title>Nedd4 mediates ErbB4 JM-a/CYT-1 ICD ubiquitination and degradation in MDCK II cells.</title>
        <authorList>
            <person name="Zeng F."/>
            <person name="Xu J."/>
            <person name="Harris R.C."/>
        </authorList>
    </citation>
    <scope>FUNCTION IN UBIQUITINATION OF ERBB4</scope>
    <scope>INTERACTION WITH ERBB4</scope>
</reference>
<reference key="15">
    <citation type="journal article" date="2009" name="Mol. Cell. Biol.">
        <title>The E3 ubiquitin ligase WWP1 selectively targets HER4 and its proteolytically derived signaling isoforms for degradation.</title>
        <authorList>
            <person name="Feng S.M."/>
            <person name="Muraoka-Cook R.S."/>
            <person name="Hunter D."/>
            <person name="Sandahl M.A."/>
            <person name="Caskey L.S."/>
            <person name="Miyazawa K."/>
            <person name="Atfi A."/>
            <person name="Earp H.S. III"/>
        </authorList>
    </citation>
    <scope>FUNCTION IN UBIQUITINATION OF ERBB4</scope>
    <scope>INTERACTION WITH ERBB4</scope>
    <scope>SUBCELLULAR LOCATION</scope>
</reference>
<reference key="16">
    <citation type="journal article" date="2009" name="Mol. Cell. Proteomics">
        <title>Large scale localization of protein phosphorylation by use of electron capture dissociation mass spectrometry.</title>
        <authorList>
            <person name="Sweet S.M."/>
            <person name="Bailey C.M."/>
            <person name="Cunningham D.L."/>
            <person name="Heath J.K."/>
            <person name="Cooper H.J."/>
        </authorList>
    </citation>
    <scope>PHOSPHORYLATION [LARGE SCALE ANALYSIS] AT THR-287 AND SER-309</scope>
    <scope>IDENTIFICATION BY MASS SPECTROMETRY [LARGE SCALE ANALYSIS]</scope>
    <source>
        <tissue>Embryonic fibroblast</tissue>
    </source>
</reference>
<reference key="17">
    <citation type="journal article" date="2010" name="Cell">
        <title>A tissue-specific atlas of mouse protein phosphorylation and expression.</title>
        <authorList>
            <person name="Huttlin E.L."/>
            <person name="Jedrychowski M.P."/>
            <person name="Elias J.E."/>
            <person name="Goswami T."/>
            <person name="Rad R."/>
            <person name="Beausoleil S.A."/>
            <person name="Villen J."/>
            <person name="Haas W."/>
            <person name="Sowa M.E."/>
            <person name="Gygi S.P."/>
        </authorList>
    </citation>
    <scope>PHOSPHORYLATION [LARGE SCALE ANALYSIS] AT THR-287 AND SER-309</scope>
    <scope>IDENTIFICATION BY MASS SPECTROMETRY [LARGE SCALE ANALYSIS]</scope>
    <source>
        <tissue>Brain</tissue>
        <tissue>Brown adipose tissue</tissue>
        <tissue>Heart</tissue>
        <tissue>Kidney</tissue>
        <tissue>Liver</tissue>
        <tissue>Lung</tissue>
        <tissue>Pancreas</tissue>
        <tissue>Spleen</tissue>
        <tissue>Testis</tissue>
    </source>
</reference>
<reference key="18">
    <citation type="journal article" date="2010" name="Neuron">
        <title>Regulation of Rap2A by the ubiquitin ligase Nedd4-1 controls neurite development.</title>
        <authorList>
            <person name="Kawabe H."/>
            <person name="Neeb A."/>
            <person name="Dimova K."/>
            <person name="Young S.M. Jr."/>
            <person name="Takeda M."/>
            <person name="Katsurabayashi S."/>
            <person name="Mitkovski M."/>
            <person name="Malakhova O.A."/>
            <person name="Zhang D.E."/>
            <person name="Umikawa M."/>
            <person name="Kariya K."/>
            <person name="Goebbels S."/>
            <person name="Nave K.A."/>
            <person name="Rosenmund C."/>
            <person name="Jahn O."/>
            <person name="Rhee J."/>
            <person name="Brose N."/>
        </authorList>
    </citation>
    <scope>FUNCTION</scope>
    <scope>DISRUPTION PHENOTYPE</scope>
    <scope>INTERACTION WITH RAP2A AND TNIK</scope>
</reference>
<reference key="19">
    <citation type="journal article" date="2010" name="J. Biol. Chem.">
        <title>Structural basis for the interaction between the growth factor-binding protein GRB10 and the E3 ubiquitin ligase NEDD4.</title>
        <authorList>
            <person name="Huang Q."/>
            <person name="Szebenyi D.M."/>
        </authorList>
    </citation>
    <scope>X-RAY CRYSTALLOGRAPHY (2.0 ANGSTROMS) OF 71-246 IN COMPLEX WITH GRB10</scope>
    <scope>INTERACTION WITH GRB10</scope>
</reference>
<reference key="20">
    <citation type="journal article" date="2017" name="Proc. Natl. Acad. Sci. U.S.A.">
        <title>Zbtb7b engages the long noncoding RNA Blnc1 to drive brown and beige fat development and thermogenesis.</title>
        <authorList>
            <person name="Li S."/>
            <person name="Mi L."/>
            <person name="Yu L."/>
            <person name="Yu Q."/>
            <person name="Liu T."/>
            <person name="Wang G.X."/>
            <person name="Zhao X.Y."/>
            <person name="Wu J."/>
            <person name="Lin J.D."/>
        </authorList>
    </citation>
    <scope>INTERACTION WITH ZBTB7B</scope>
</reference>
<name>NEDD4_MOUSE</name>
<protein>
    <recommendedName>
        <fullName>E3 ubiquitin-protein ligase NEDD4</fullName>
        <ecNumber evidence="2">2.3.2.26</ecNumber>
    </recommendedName>
    <alternativeName>
        <fullName>HECT-type E3 ubiquitin transferase NEDD4</fullName>
    </alternativeName>
    <alternativeName>
        <fullName>Neural precursor cell expressed developmentally down-regulated protein 4</fullName>
        <shortName>NEDD-4</shortName>
    </alternativeName>
</protein>
<proteinExistence type="evidence at protein level"/>
<accession>P46935</accession>
<accession>O08758</accession>
<accession>Q3UZI2</accession>
<accession>Q8BGB3</accession>
<evidence type="ECO:0000250" key="1"/>
<evidence type="ECO:0000250" key="2">
    <source>
        <dbReference type="UniProtKB" id="P46934"/>
    </source>
</evidence>
<evidence type="ECO:0000250" key="3">
    <source>
        <dbReference type="UniProtKB" id="Q62940"/>
    </source>
</evidence>
<evidence type="ECO:0000255" key="4">
    <source>
        <dbReference type="PROSITE-ProRule" id="PRU00041"/>
    </source>
</evidence>
<evidence type="ECO:0000255" key="5">
    <source>
        <dbReference type="PROSITE-ProRule" id="PRU00104"/>
    </source>
</evidence>
<evidence type="ECO:0000255" key="6">
    <source>
        <dbReference type="PROSITE-ProRule" id="PRU00224"/>
    </source>
</evidence>
<evidence type="ECO:0000256" key="7">
    <source>
        <dbReference type="SAM" id="MobiDB-lite"/>
    </source>
</evidence>
<evidence type="ECO:0000269" key="8">
    <source>
    </source>
</evidence>
<evidence type="ECO:0000269" key="9">
    <source>
    </source>
</evidence>
<evidence type="ECO:0000269" key="10">
    <source>
    </source>
</evidence>
<evidence type="ECO:0000269" key="11">
    <source>
    </source>
</evidence>
<evidence type="ECO:0000269" key="12">
    <source>
    </source>
</evidence>
<evidence type="ECO:0000269" key="13">
    <source>
    </source>
</evidence>
<evidence type="ECO:0000269" key="14">
    <source>
    </source>
</evidence>
<evidence type="ECO:0000269" key="15">
    <source>
    </source>
</evidence>
<evidence type="ECO:0000269" key="16">
    <source>
    </source>
</evidence>
<evidence type="ECO:0000269" key="17">
    <source>
    </source>
</evidence>
<evidence type="ECO:0000269" key="18">
    <source>
    </source>
</evidence>
<evidence type="ECO:0000269" key="19">
    <source>
    </source>
</evidence>
<evidence type="ECO:0000305" key="20"/>
<evidence type="ECO:0007744" key="21">
    <source>
    </source>
</evidence>
<evidence type="ECO:0007744" key="22">
    <source>
    </source>
</evidence>
<evidence type="ECO:0007744" key="23">
    <source>
    </source>
</evidence>
<evidence type="ECO:0007744" key="24">
    <source>
    </source>
</evidence>
<evidence type="ECO:0007829" key="25">
    <source>
        <dbReference type="PDB" id="3M7F"/>
    </source>
</evidence>
<feature type="chain" id="PRO_0000120320" description="E3 ubiquitin-protein ligase NEDD4">
    <location>
        <begin position="1"/>
        <end position="887"/>
    </location>
</feature>
<feature type="domain" description="C2" evidence="4">
    <location>
        <begin position="58"/>
        <end position="183"/>
    </location>
</feature>
<feature type="domain" description="WW 1" evidence="6">
    <location>
        <begin position="249"/>
        <end position="282"/>
    </location>
</feature>
<feature type="domain" description="WW 2" evidence="6">
    <location>
        <begin position="405"/>
        <end position="438"/>
    </location>
</feature>
<feature type="domain" description="WW 3" evidence="6">
    <location>
        <begin position="460"/>
        <end position="493"/>
    </location>
</feature>
<feature type="domain" description="HECT" evidence="5">
    <location>
        <begin position="552"/>
        <end position="887"/>
    </location>
</feature>
<feature type="region of interest" description="Mediates interaction with TNIK" evidence="15">
    <location>
        <begin position="217"/>
        <end position="549"/>
    </location>
</feature>
<feature type="region of interest" description="Disordered" evidence="7">
    <location>
        <begin position="236"/>
        <end position="257"/>
    </location>
</feature>
<feature type="region of interest" description="Disordered" evidence="7">
    <location>
        <begin position="271"/>
        <end position="290"/>
    </location>
</feature>
<feature type="region of interest" description="Disordered" evidence="7">
    <location>
        <begin position="302"/>
        <end position="322"/>
    </location>
</feature>
<feature type="short sequence motif" description="Nuclear export signal" evidence="2">
    <location>
        <begin position="354"/>
        <end position="364"/>
    </location>
</feature>
<feature type="compositionally biased region" description="Pro residues" evidence="7">
    <location>
        <begin position="243"/>
        <end position="253"/>
    </location>
</feature>
<feature type="active site" description="Glycyl thioester intermediate">
    <location>
        <position position="854"/>
    </location>
</feature>
<feature type="modified residue" description="Phosphoserine" evidence="3">
    <location>
        <position position="215"/>
    </location>
</feature>
<feature type="modified residue" description="Phosphothreonine" evidence="23 24">
    <location>
        <position position="287"/>
    </location>
</feature>
<feature type="modified residue" description="Phosphoserine" evidence="21 22 23 24">
    <location>
        <position position="309"/>
    </location>
</feature>
<feature type="modified residue" description="Phosphoserine" evidence="2">
    <location>
        <position position="380"/>
    </location>
</feature>
<feature type="modified residue" description="Phosphoserine" evidence="2">
    <location>
        <position position="385"/>
    </location>
</feature>
<feature type="cross-link" description="Glycyl lysine isopeptide (Lys-Gly) (interchain with G-Cter in ubiquitin)" evidence="2">
    <location>
        <position position="847"/>
    </location>
</feature>
<feature type="mutagenesis site" description="Loss of ubiquitin-ligase activity. No effect on VEGFR-2/KDFR degradation." evidence="10">
    <original>C</original>
    <variation>S</variation>
    <location>
        <position position="854"/>
    </location>
</feature>
<feature type="strand" evidence="25">
    <location>
        <begin position="78"/>
        <end position="89"/>
    </location>
</feature>
<feature type="strand" evidence="25">
    <location>
        <begin position="101"/>
        <end position="109"/>
    </location>
</feature>
<feature type="turn" evidence="25">
    <location>
        <begin position="110"/>
        <end position="112"/>
    </location>
</feature>
<feature type="strand" evidence="25">
    <location>
        <begin position="113"/>
        <end position="119"/>
    </location>
</feature>
<feature type="strand" evidence="25">
    <location>
        <begin position="130"/>
        <end position="139"/>
    </location>
</feature>
<feature type="turn" evidence="25">
    <location>
        <begin position="141"/>
        <end position="143"/>
    </location>
</feature>
<feature type="strand" evidence="25">
    <location>
        <begin position="145"/>
        <end position="152"/>
    </location>
</feature>
<feature type="strand" evidence="25">
    <location>
        <begin position="160"/>
        <end position="169"/>
    </location>
</feature>
<feature type="strand" evidence="25">
    <location>
        <begin position="186"/>
        <end position="189"/>
    </location>
</feature>
<feature type="strand" evidence="25">
    <location>
        <begin position="201"/>
        <end position="209"/>
    </location>
</feature>
<dbReference type="EC" id="2.3.2.26" evidence="2"/>
<dbReference type="EMBL" id="D85414">
    <property type="protein sequence ID" value="BAA12803.1"/>
    <property type="molecule type" value="mRNA"/>
</dbReference>
<dbReference type="EMBL" id="U96635">
    <property type="protein sequence ID" value="AAB63360.1"/>
    <property type="status" value="ALT_FRAME"/>
    <property type="molecule type" value="mRNA"/>
</dbReference>
<dbReference type="EMBL" id="AK088620">
    <property type="protein sequence ID" value="BAC40458.1"/>
    <property type="molecule type" value="mRNA"/>
</dbReference>
<dbReference type="EMBL" id="AK088767">
    <property type="protein sequence ID" value="BAC40558.1"/>
    <property type="molecule type" value="mRNA"/>
</dbReference>
<dbReference type="EMBL" id="AK122203">
    <property type="protein sequence ID" value="BAC65485.1"/>
    <property type="molecule type" value="mRNA"/>
</dbReference>
<dbReference type="EMBL" id="AK133838">
    <property type="protein sequence ID" value="BAE21875.1"/>
    <property type="molecule type" value="mRNA"/>
</dbReference>
<dbReference type="CCDS" id="CCDS72275.1"/>
<dbReference type="RefSeq" id="NP_035020.2">
    <property type="nucleotide sequence ID" value="NM_010890.3"/>
</dbReference>
<dbReference type="PDB" id="3M7F">
    <property type="method" value="X-ray"/>
    <property type="resolution" value="2.00 A"/>
    <property type="chains" value="B=71-246"/>
</dbReference>
<dbReference type="PDBsum" id="3M7F"/>
<dbReference type="SMR" id="P46935"/>
<dbReference type="BioGRID" id="201723">
    <property type="interactions" value="90"/>
</dbReference>
<dbReference type="CORUM" id="P46935"/>
<dbReference type="DIP" id="DIP-32323N"/>
<dbReference type="ELM" id="P46935"/>
<dbReference type="FunCoup" id="P46935">
    <property type="interactions" value="2005"/>
</dbReference>
<dbReference type="IntAct" id="P46935">
    <property type="interactions" value="21"/>
</dbReference>
<dbReference type="MINT" id="P46935"/>
<dbReference type="STRING" id="10090.ENSMUSP00000034740"/>
<dbReference type="ChEMBL" id="CHEMBL4879438"/>
<dbReference type="GlyGen" id="P46935">
    <property type="glycosylation" value="4 sites, 1 O-linked glycan (4 sites)"/>
</dbReference>
<dbReference type="iPTMnet" id="P46935"/>
<dbReference type="PhosphoSitePlus" id="P46935"/>
<dbReference type="SwissPalm" id="P46935"/>
<dbReference type="jPOST" id="P46935"/>
<dbReference type="PaxDb" id="10090-ENSMUSP00000034740"/>
<dbReference type="ProteomicsDB" id="252877"/>
<dbReference type="Pumba" id="P46935"/>
<dbReference type="Antibodypedia" id="25114">
    <property type="antibodies" value="319 antibodies from 39 providers"/>
</dbReference>
<dbReference type="DNASU" id="17999"/>
<dbReference type="Ensembl" id="ENSMUST00000034740.15">
    <property type="protein sequence ID" value="ENSMUSP00000034740.8"/>
    <property type="gene ID" value="ENSMUSG00000032216.16"/>
</dbReference>
<dbReference type="GeneID" id="17999"/>
<dbReference type="KEGG" id="mmu:17999"/>
<dbReference type="UCSC" id="uc009qqe.1">
    <property type="organism name" value="mouse"/>
</dbReference>
<dbReference type="AGR" id="MGI:97297"/>
<dbReference type="CTD" id="4734"/>
<dbReference type="MGI" id="MGI:97297">
    <property type="gene designation" value="Nedd4"/>
</dbReference>
<dbReference type="VEuPathDB" id="HostDB:ENSMUSG00000032216"/>
<dbReference type="eggNOG" id="KOG0940">
    <property type="taxonomic scope" value="Eukaryota"/>
</dbReference>
<dbReference type="GeneTree" id="ENSGT00940000158905"/>
<dbReference type="HOGENOM" id="CLU_002173_0_3_1"/>
<dbReference type="InParanoid" id="P46935"/>
<dbReference type="OMA" id="GWGMQIA"/>
<dbReference type="PhylomeDB" id="P46935"/>
<dbReference type="TreeFam" id="TF323658"/>
<dbReference type="Reactome" id="R-MMU-1169408">
    <property type="pathway name" value="ISG15 antiviral mechanism"/>
</dbReference>
<dbReference type="Reactome" id="R-MMU-1253288">
    <property type="pathway name" value="Downregulation of ERBB4 signaling"/>
</dbReference>
<dbReference type="Reactome" id="R-MMU-8948747">
    <property type="pathway name" value="Regulation of PTEN localization"/>
</dbReference>
<dbReference type="Reactome" id="R-MMU-8948751">
    <property type="pathway name" value="Regulation of PTEN stability and activity"/>
</dbReference>
<dbReference type="Reactome" id="R-MMU-983168">
    <property type="pathway name" value="Antigen processing: Ubiquitination &amp; Proteasome degradation"/>
</dbReference>
<dbReference type="UniPathway" id="UPA00143"/>
<dbReference type="BioGRID-ORCS" id="17999">
    <property type="hits" value="1 hit in 71 CRISPR screens"/>
</dbReference>
<dbReference type="ChiTaRS" id="Nedd4">
    <property type="organism name" value="mouse"/>
</dbReference>
<dbReference type="EvolutionaryTrace" id="P46935"/>
<dbReference type="PRO" id="PR:P46935"/>
<dbReference type="Proteomes" id="UP000000589">
    <property type="component" value="Chromosome 9"/>
</dbReference>
<dbReference type="RNAct" id="P46935">
    <property type="molecule type" value="protein"/>
</dbReference>
<dbReference type="Bgee" id="ENSMUSG00000032216">
    <property type="expression patterns" value="Expressed in metanephric loop of Henle and 268 other cell types or tissues"/>
</dbReference>
<dbReference type="ExpressionAtlas" id="P46935">
    <property type="expression patterns" value="baseline and differential"/>
</dbReference>
<dbReference type="GO" id="GO:0005938">
    <property type="term" value="C:cell cortex"/>
    <property type="evidence" value="ECO:0007669"/>
    <property type="project" value="Ensembl"/>
</dbReference>
<dbReference type="GO" id="GO:0000785">
    <property type="term" value="C:chromatin"/>
    <property type="evidence" value="ECO:0007669"/>
    <property type="project" value="Ensembl"/>
</dbReference>
<dbReference type="GO" id="GO:0005737">
    <property type="term" value="C:cytoplasm"/>
    <property type="evidence" value="ECO:0000314"/>
    <property type="project" value="MGI"/>
</dbReference>
<dbReference type="GO" id="GO:0005829">
    <property type="term" value="C:cytosol"/>
    <property type="evidence" value="ECO:0000314"/>
    <property type="project" value="MGI"/>
</dbReference>
<dbReference type="GO" id="GO:0098978">
    <property type="term" value="C:glutamatergic synapse"/>
    <property type="evidence" value="ECO:0000314"/>
    <property type="project" value="SynGO"/>
</dbReference>
<dbReference type="GO" id="GO:0005794">
    <property type="term" value="C:Golgi apparatus"/>
    <property type="evidence" value="ECO:0007669"/>
    <property type="project" value="Ensembl"/>
</dbReference>
<dbReference type="GO" id="GO:0016020">
    <property type="term" value="C:membrane"/>
    <property type="evidence" value="ECO:0000314"/>
    <property type="project" value="MGI"/>
</dbReference>
<dbReference type="GO" id="GO:0005654">
    <property type="term" value="C:nucleoplasm"/>
    <property type="evidence" value="ECO:0007669"/>
    <property type="project" value="Ensembl"/>
</dbReference>
<dbReference type="GO" id="GO:0005634">
    <property type="term" value="C:nucleus"/>
    <property type="evidence" value="ECO:0000250"/>
    <property type="project" value="UniProtKB"/>
</dbReference>
<dbReference type="GO" id="GO:0048471">
    <property type="term" value="C:perinuclear region of cytoplasm"/>
    <property type="evidence" value="ECO:0007669"/>
    <property type="project" value="Ensembl"/>
</dbReference>
<dbReference type="GO" id="GO:0005886">
    <property type="term" value="C:plasma membrane"/>
    <property type="evidence" value="ECO:0007669"/>
    <property type="project" value="UniProtKB-SubCell"/>
</dbReference>
<dbReference type="GO" id="GO:0099524">
    <property type="term" value="C:postsynaptic cytosol"/>
    <property type="evidence" value="ECO:0000314"/>
    <property type="project" value="SynGO"/>
</dbReference>
<dbReference type="GO" id="GO:0000151">
    <property type="term" value="C:ubiquitin ligase complex"/>
    <property type="evidence" value="ECO:0000353"/>
    <property type="project" value="MGI"/>
</dbReference>
<dbReference type="GO" id="GO:0031698">
    <property type="term" value="F:beta-2 adrenergic receptor binding"/>
    <property type="evidence" value="ECO:0007669"/>
    <property type="project" value="Ensembl"/>
</dbReference>
<dbReference type="GO" id="GO:0035255">
    <property type="term" value="F:ionotropic glutamate receptor binding"/>
    <property type="evidence" value="ECO:0000314"/>
    <property type="project" value="ParkinsonsUK-UCL"/>
</dbReference>
<dbReference type="GO" id="GO:0050815">
    <property type="term" value="F:phosphoserine residue binding"/>
    <property type="evidence" value="ECO:0000314"/>
    <property type="project" value="BHF-UCL"/>
</dbReference>
<dbReference type="GO" id="GO:0050816">
    <property type="term" value="F:phosphothreonine residue binding"/>
    <property type="evidence" value="ECO:0000314"/>
    <property type="project" value="BHF-UCL"/>
</dbReference>
<dbReference type="GO" id="GO:0019870">
    <property type="term" value="F:potassium channel inhibitor activity"/>
    <property type="evidence" value="ECO:0007669"/>
    <property type="project" value="Ensembl"/>
</dbReference>
<dbReference type="GO" id="GO:0070064">
    <property type="term" value="F:proline-rich region binding"/>
    <property type="evidence" value="ECO:0000353"/>
    <property type="project" value="MGI"/>
</dbReference>
<dbReference type="GO" id="GO:0019904">
    <property type="term" value="F:protein domain specific binding"/>
    <property type="evidence" value="ECO:0007669"/>
    <property type="project" value="Ensembl"/>
</dbReference>
<dbReference type="GO" id="GO:0070063">
    <property type="term" value="F:RNA polymerase binding"/>
    <property type="evidence" value="ECO:0007669"/>
    <property type="project" value="Ensembl"/>
</dbReference>
<dbReference type="GO" id="GO:0019871">
    <property type="term" value="F:sodium channel inhibitor activity"/>
    <property type="evidence" value="ECO:0000314"/>
    <property type="project" value="MGI"/>
</dbReference>
<dbReference type="GO" id="GO:0044325">
    <property type="term" value="F:transmembrane transporter binding"/>
    <property type="evidence" value="ECO:0007669"/>
    <property type="project" value="Ensembl"/>
</dbReference>
<dbReference type="GO" id="GO:0043130">
    <property type="term" value="F:ubiquitin binding"/>
    <property type="evidence" value="ECO:0007669"/>
    <property type="project" value="Ensembl"/>
</dbReference>
<dbReference type="GO" id="GO:0061630">
    <property type="term" value="F:ubiquitin protein ligase activity"/>
    <property type="evidence" value="ECO:0000314"/>
    <property type="project" value="MGI"/>
</dbReference>
<dbReference type="GO" id="GO:0002250">
    <property type="term" value="P:adaptive immune response"/>
    <property type="evidence" value="ECO:0000315"/>
    <property type="project" value="MGI"/>
</dbReference>
<dbReference type="GO" id="GO:0048514">
    <property type="term" value="P:blood vessel morphogenesis"/>
    <property type="evidence" value="ECO:0000315"/>
    <property type="project" value="MGI"/>
</dbReference>
<dbReference type="GO" id="GO:0034644">
    <property type="term" value="P:cellular response to UV"/>
    <property type="evidence" value="ECO:0007669"/>
    <property type="project" value="Ensembl"/>
</dbReference>
<dbReference type="GO" id="GO:0006974">
    <property type="term" value="P:DNA damage response"/>
    <property type="evidence" value="ECO:0007669"/>
    <property type="project" value="Ensembl"/>
</dbReference>
<dbReference type="GO" id="GO:0003197">
    <property type="term" value="P:endocardial cushion development"/>
    <property type="evidence" value="ECO:0000315"/>
    <property type="project" value="MGI"/>
</dbReference>
<dbReference type="GO" id="GO:0051649">
    <property type="term" value="P:establishment of localization in cell"/>
    <property type="evidence" value="ECO:0000314"/>
    <property type="project" value="MGI"/>
</dbReference>
<dbReference type="GO" id="GO:0044111">
    <property type="term" value="P:formation of structure involved in a symbiotic process"/>
    <property type="evidence" value="ECO:0007669"/>
    <property type="project" value="Ensembl"/>
</dbReference>
<dbReference type="GO" id="GO:0045087">
    <property type="term" value="P:innate immune response"/>
    <property type="evidence" value="ECO:0007669"/>
    <property type="project" value="Ensembl"/>
</dbReference>
<dbReference type="GO" id="GO:1903765">
    <property type="term" value="P:negative regulation of potassium ion export across plasma membrane"/>
    <property type="evidence" value="ECO:0007669"/>
    <property type="project" value="Ensembl"/>
</dbReference>
<dbReference type="GO" id="GO:0010766">
    <property type="term" value="P:negative regulation of sodium ion transport"/>
    <property type="evidence" value="ECO:0000314"/>
    <property type="project" value="MGI"/>
</dbReference>
<dbReference type="GO" id="GO:0000122">
    <property type="term" value="P:negative regulation of transcription by RNA polymerase II"/>
    <property type="evidence" value="ECO:0000315"/>
    <property type="project" value="MGI"/>
</dbReference>
<dbReference type="GO" id="GO:0030948">
    <property type="term" value="P:negative regulation of vascular endothelial growth factor receptor signaling pathway"/>
    <property type="evidence" value="ECO:0000314"/>
    <property type="project" value="UniProtKB"/>
</dbReference>
<dbReference type="GO" id="GO:0007528">
    <property type="term" value="P:neuromuscular junction development"/>
    <property type="evidence" value="ECO:0000315"/>
    <property type="project" value="MGI"/>
</dbReference>
<dbReference type="GO" id="GO:0031175">
    <property type="term" value="P:neuron projection development"/>
    <property type="evidence" value="ECO:0007669"/>
    <property type="project" value="Ensembl"/>
</dbReference>
<dbReference type="GO" id="GO:0042921">
    <property type="term" value="P:nuclear receptor-mediated glucocorticoid signaling pathway"/>
    <property type="evidence" value="ECO:0007669"/>
    <property type="project" value="Ensembl"/>
</dbReference>
<dbReference type="GO" id="GO:0003151">
    <property type="term" value="P:outflow tract morphogenesis"/>
    <property type="evidence" value="ECO:0000315"/>
    <property type="project" value="MGI"/>
</dbReference>
<dbReference type="GO" id="GO:0046824">
    <property type="term" value="P:positive regulation of nucleocytoplasmic transport"/>
    <property type="evidence" value="ECO:0007669"/>
    <property type="project" value="Ensembl"/>
</dbReference>
<dbReference type="GO" id="GO:0051897">
    <property type="term" value="P:positive regulation of phosphatidylinositol 3-kinase/protein kinase B signal transduction"/>
    <property type="evidence" value="ECO:0007669"/>
    <property type="project" value="Ensembl"/>
</dbReference>
<dbReference type="GO" id="GO:0045732">
    <property type="term" value="P:positive regulation of protein catabolic process"/>
    <property type="evidence" value="ECO:0000314"/>
    <property type="project" value="MGI"/>
</dbReference>
<dbReference type="GO" id="GO:0050847">
    <property type="term" value="P:progesterone receptor signaling pathway"/>
    <property type="evidence" value="ECO:0007669"/>
    <property type="project" value="Ensembl"/>
</dbReference>
<dbReference type="GO" id="GO:0070534">
    <property type="term" value="P:protein K63-linked ubiquitination"/>
    <property type="evidence" value="ECO:0000250"/>
    <property type="project" value="UniProtKB"/>
</dbReference>
<dbReference type="GO" id="GO:0006513">
    <property type="term" value="P:protein monoubiquitination"/>
    <property type="evidence" value="ECO:0000314"/>
    <property type="project" value="MGI"/>
</dbReference>
<dbReference type="GO" id="GO:0006622">
    <property type="term" value="P:protein targeting to lysosome"/>
    <property type="evidence" value="ECO:0007669"/>
    <property type="project" value="Ensembl"/>
</dbReference>
<dbReference type="GO" id="GO:0016567">
    <property type="term" value="P:protein ubiquitination"/>
    <property type="evidence" value="ECO:0000314"/>
    <property type="project" value="MGI"/>
</dbReference>
<dbReference type="GO" id="GO:0032801">
    <property type="term" value="P:receptor catabolic process"/>
    <property type="evidence" value="ECO:0007669"/>
    <property type="project" value="Ensembl"/>
</dbReference>
<dbReference type="GO" id="GO:0031623">
    <property type="term" value="P:receptor internalization"/>
    <property type="evidence" value="ECO:0007669"/>
    <property type="project" value="Ensembl"/>
</dbReference>
<dbReference type="GO" id="GO:0048814">
    <property type="term" value="P:regulation of dendrite morphogenesis"/>
    <property type="evidence" value="ECO:0000315"/>
    <property type="project" value="UniProtKB"/>
</dbReference>
<dbReference type="GO" id="GO:0042391">
    <property type="term" value="P:regulation of membrane potential"/>
    <property type="evidence" value="ECO:0007669"/>
    <property type="project" value="Ensembl"/>
</dbReference>
<dbReference type="GO" id="GO:0050807">
    <property type="term" value="P:regulation of synapse organization"/>
    <property type="evidence" value="ECO:0000315"/>
    <property type="project" value="MGI"/>
</dbReference>
<dbReference type="GO" id="GO:0006814">
    <property type="term" value="P:sodium ion transport"/>
    <property type="evidence" value="ECO:0000314"/>
    <property type="project" value="MGI"/>
</dbReference>
<dbReference type="GO" id="GO:0042110">
    <property type="term" value="P:T cell activation"/>
    <property type="evidence" value="ECO:0000315"/>
    <property type="project" value="MGI"/>
</dbReference>
<dbReference type="GO" id="GO:0006511">
    <property type="term" value="P:ubiquitin-dependent protein catabolic process"/>
    <property type="evidence" value="ECO:0000315"/>
    <property type="project" value="MGI"/>
</dbReference>
<dbReference type="GO" id="GO:0043162">
    <property type="term" value="P:ubiquitin-dependent protein catabolic process via the multivesicular body sorting pathway"/>
    <property type="evidence" value="ECO:0007669"/>
    <property type="project" value="Ensembl"/>
</dbReference>
<dbReference type="GO" id="GO:0046755">
    <property type="term" value="P:viral budding"/>
    <property type="evidence" value="ECO:0007669"/>
    <property type="project" value="Ensembl"/>
</dbReference>
<dbReference type="CDD" id="cd04033">
    <property type="entry name" value="C2_NEDD4_NEDD4L"/>
    <property type="match status" value="1"/>
</dbReference>
<dbReference type="CDD" id="cd00078">
    <property type="entry name" value="HECTc"/>
    <property type="match status" value="1"/>
</dbReference>
<dbReference type="CDD" id="cd00201">
    <property type="entry name" value="WW"/>
    <property type="match status" value="3"/>
</dbReference>
<dbReference type="FunFam" id="2.20.70.10:FF:000005">
    <property type="entry name" value="E3 ubiquitin-protein ligase"/>
    <property type="match status" value="1"/>
</dbReference>
<dbReference type="FunFam" id="3.90.1750.10:FF:000026">
    <property type="entry name" value="E3 ubiquitin-protein ligase HACE1"/>
    <property type="match status" value="1"/>
</dbReference>
<dbReference type="FunFam" id="2.20.70.10:FF:000099">
    <property type="entry name" value="E3 ubiquitin-protein ligase NEDD4"/>
    <property type="match status" value="1"/>
</dbReference>
<dbReference type="FunFam" id="2.20.70.10:FF:000096">
    <property type="entry name" value="E3 ubiquitin-protein ligase NEDD4 isoform X4"/>
    <property type="match status" value="1"/>
</dbReference>
<dbReference type="FunFam" id="3.30.2160.10:FF:000001">
    <property type="entry name" value="E3 ubiquitin-protein ligase NEDD4-like"/>
    <property type="match status" value="1"/>
</dbReference>
<dbReference type="FunFam" id="3.30.2410.10:FF:000001">
    <property type="entry name" value="E3 ubiquitin-protein ligase NEDD4-like"/>
    <property type="match status" value="1"/>
</dbReference>
<dbReference type="FunFam" id="3.90.1750.10:FF:000001">
    <property type="entry name" value="E3 ubiquitin-protein ligase NEDD4-like"/>
    <property type="match status" value="1"/>
</dbReference>
<dbReference type="FunFam" id="2.60.40.150:FF:000047">
    <property type="entry name" value="Putative E3 ubiquitin-protein ligase NEDD4-like"/>
    <property type="match status" value="1"/>
</dbReference>
<dbReference type="Gene3D" id="2.20.70.10">
    <property type="match status" value="2"/>
</dbReference>
<dbReference type="Gene3D" id="2.60.40.150">
    <property type="entry name" value="C2 domain"/>
    <property type="match status" value="1"/>
</dbReference>
<dbReference type="Gene3D" id="3.30.2160.10">
    <property type="entry name" value="Hect, E3 ligase catalytic domain"/>
    <property type="match status" value="1"/>
</dbReference>
<dbReference type="Gene3D" id="3.30.2410.10">
    <property type="entry name" value="Hect, E3 ligase catalytic domain"/>
    <property type="match status" value="1"/>
</dbReference>
<dbReference type="Gene3D" id="3.90.1750.10">
    <property type="entry name" value="Hect, E3 ligase catalytic domains"/>
    <property type="match status" value="1"/>
</dbReference>
<dbReference type="InterPro" id="IPR000008">
    <property type="entry name" value="C2_dom"/>
</dbReference>
<dbReference type="InterPro" id="IPR035892">
    <property type="entry name" value="C2_domain_sf"/>
</dbReference>
<dbReference type="InterPro" id="IPR024928">
    <property type="entry name" value="E3_ub_ligase_SMURF1"/>
</dbReference>
<dbReference type="InterPro" id="IPR050409">
    <property type="entry name" value="E3_ubiq-protein_ligase"/>
</dbReference>
<dbReference type="InterPro" id="IPR000569">
    <property type="entry name" value="HECT_dom"/>
</dbReference>
<dbReference type="InterPro" id="IPR035983">
    <property type="entry name" value="Hect_E3_ubiquitin_ligase"/>
</dbReference>
<dbReference type="InterPro" id="IPR001202">
    <property type="entry name" value="WW_dom"/>
</dbReference>
<dbReference type="InterPro" id="IPR036020">
    <property type="entry name" value="WW_dom_sf"/>
</dbReference>
<dbReference type="PANTHER" id="PTHR11254:SF282">
    <property type="entry name" value="E3 UBIQUITIN-PROTEIN LIGASE NEDD4"/>
    <property type="match status" value="1"/>
</dbReference>
<dbReference type="PANTHER" id="PTHR11254">
    <property type="entry name" value="HECT DOMAIN UBIQUITIN-PROTEIN LIGASE"/>
    <property type="match status" value="1"/>
</dbReference>
<dbReference type="Pfam" id="PF00168">
    <property type="entry name" value="C2"/>
    <property type="match status" value="1"/>
</dbReference>
<dbReference type="Pfam" id="PF00632">
    <property type="entry name" value="HECT"/>
    <property type="match status" value="1"/>
</dbReference>
<dbReference type="Pfam" id="PF00397">
    <property type="entry name" value="WW"/>
    <property type="match status" value="3"/>
</dbReference>
<dbReference type="PIRSF" id="PIRSF001569">
    <property type="entry name" value="E3_ub_ligase_SMURF1"/>
    <property type="match status" value="1"/>
</dbReference>
<dbReference type="SMART" id="SM00239">
    <property type="entry name" value="C2"/>
    <property type="match status" value="1"/>
</dbReference>
<dbReference type="SMART" id="SM00119">
    <property type="entry name" value="HECTc"/>
    <property type="match status" value="1"/>
</dbReference>
<dbReference type="SMART" id="SM00456">
    <property type="entry name" value="WW"/>
    <property type="match status" value="3"/>
</dbReference>
<dbReference type="SUPFAM" id="SSF49562">
    <property type="entry name" value="C2 domain (Calcium/lipid-binding domain, CaLB)"/>
    <property type="match status" value="1"/>
</dbReference>
<dbReference type="SUPFAM" id="SSF56204">
    <property type="entry name" value="Hect, E3 ligase catalytic domain"/>
    <property type="match status" value="1"/>
</dbReference>
<dbReference type="SUPFAM" id="SSF51045">
    <property type="entry name" value="WW domain"/>
    <property type="match status" value="3"/>
</dbReference>
<dbReference type="PROSITE" id="PS50004">
    <property type="entry name" value="C2"/>
    <property type="match status" value="1"/>
</dbReference>
<dbReference type="PROSITE" id="PS50237">
    <property type="entry name" value="HECT"/>
    <property type="match status" value="1"/>
</dbReference>
<dbReference type="PROSITE" id="PS01159">
    <property type="entry name" value="WW_DOMAIN_1"/>
    <property type="match status" value="3"/>
</dbReference>
<dbReference type="PROSITE" id="PS50020">
    <property type="entry name" value="WW_DOMAIN_2"/>
    <property type="match status" value="3"/>
</dbReference>
<sequence length="887" mass="102706">MSSDMAADESEAPVLSEDEVWEFCLDKTEDGGGSPGSDVTDTCEPPCGCWELNPNSLEEEHVLFTADPYLELHNDDTRVVRVKVIAGIGLAKKDILGASDPYVRVTLYDPMSGILTSVQTKTIKKSLNPKWNEEILFRVLPQRHRILFEVFDENRLTRDDFLGQVDVPLYPLPTENPRMERPYTFKDFVLHPRSHKSRVKGYLRLKMTYLPKNGSEDENADQAEELEPGWVVLDQPDAATHLPHPPEPSPLPPGWEERQDVLGRTYYVNHESRRTQWKRPSPDDDLTDEDNDDMQLQAQRAFTTRRQISEDVDGPDNRESPENWEIVREDENTEYSGQAVQSPPSGHIDVQTHLAEEFNTRLAVCGNPATSQPVTSSNHSSRGGSLQTCIFEEQPTLPVLLPTSSGLPPGWEEKQDDRGRSYYVDHNSKTTTWSKPTMQDDPRSKIPAHLRGKTDSNDLGPLPPGWEERTHTDGRVFFINHNIKKTQWEDPRLQNVAITGPAVPYSRDYKRKYEFFRRKLKKQTDIPNKFEMKLRRANILEDSYRRIMGVKRADLLKARLWIEFDGEKGLDYGGVAREWFFLISKEMFNPYYGLFEYSATDNYTLQINPNSGLCNEDHLSYFKFIGRVAGMAVYHGKLLDGFFIRPFYKMMLQKLITLHDMESVDSEYYSSLRWILENDPTELDLRFIIDEELFGQTHQHELKTGGSEIVVTNKNKKEYIYLVIQWRFVNRIQKQMAAFKEGFFELIPQDLIKIFDENELELLMCGLGDVDVNDWREHTKYKNGYSMNHQVIHWFWKAVWMMDSEKRIRLLQFVTGTSRVPMNGFAELYGSNGPQSFTVEQWGTPDKLPRAHTCFNRLDLPPYESFDELWDKLQMAIENTQGFDGVD</sequence>